<organism>
    <name type="scientific">Mus musculus</name>
    <name type="common">Mouse</name>
    <dbReference type="NCBI Taxonomy" id="10090"/>
    <lineage>
        <taxon>Eukaryota</taxon>
        <taxon>Metazoa</taxon>
        <taxon>Chordata</taxon>
        <taxon>Craniata</taxon>
        <taxon>Vertebrata</taxon>
        <taxon>Euteleostomi</taxon>
        <taxon>Mammalia</taxon>
        <taxon>Eutheria</taxon>
        <taxon>Euarchontoglires</taxon>
        <taxon>Glires</taxon>
        <taxon>Rodentia</taxon>
        <taxon>Myomorpha</taxon>
        <taxon>Muroidea</taxon>
        <taxon>Muridae</taxon>
        <taxon>Murinae</taxon>
        <taxon>Mus</taxon>
        <taxon>Mus</taxon>
    </lineage>
</organism>
<gene>
    <name evidence="13" type="primary">Il6ra</name>
    <name type="synonym">Il6r</name>
</gene>
<keyword id="KW-1003">Cell membrane</keyword>
<keyword id="KW-1015">Disulfide bond</keyword>
<keyword id="KW-0325">Glycoprotein</keyword>
<keyword id="KW-0393">Immunoglobulin domain</keyword>
<keyword id="KW-0472">Membrane</keyword>
<keyword id="KW-0675">Receptor</keyword>
<keyword id="KW-1185">Reference proteome</keyword>
<keyword id="KW-0677">Repeat</keyword>
<keyword id="KW-0964">Secreted</keyword>
<keyword id="KW-0732">Signal</keyword>
<keyword id="KW-0812">Transmembrane</keyword>
<keyword id="KW-1133">Transmembrane helix</keyword>
<protein>
    <recommendedName>
        <fullName evidence="11">Interleukin-6 receptor subunit alpha</fullName>
        <shortName>IL-6 receptor subunit alpha</shortName>
        <shortName>IL-6R subunit alpha</shortName>
        <shortName>IL-6R-alpha</shortName>
        <shortName>IL-6RA</shortName>
    </recommendedName>
    <alternativeName>
        <fullName>IL-6R 1</fullName>
    </alternativeName>
    <cdAntigenName>CD126</cdAntigenName>
    <component>
        <recommendedName>
            <fullName evidence="11">Soluble interleukin-6 receptor subunit alpha</fullName>
            <shortName evidence="10">sIL6R</shortName>
        </recommendedName>
    </component>
</protein>
<accession>P22272</accession>
<comment type="function">
    <text evidence="12">Part of the receptor for interleukin 6. Binds to IL6 with low affinity, but does not transduce a signal. Signal activation necessitate an association with IL6ST. Activation leads to the regulation of the immune response, acute-phase reactions and hematopoiesis. The interaction with membrane-bound IL6R and IL6ST stimulates 'classic signaling', the restricted expression of the IL6R limits classic IL6 signaling to only a few tissues such as the liver and some cells of the immune system. Whereas the binding of IL6 and soluble IL6R to IL6ST stimulates 'trans-signaling'. Alternatively, 'cluster signaling' occurs when membrane-bound IL6:IL6R complexes on transmitter cells activate IL6ST receptors on neighboring receiver cells.</text>
</comment>
<comment type="function">
    <molecule>Interleukin-6 receptor subunit alpha</molecule>
    <text evidence="7 12">Signaling via the membrane-bound IL6R is mostly regenerative and anti-inflammatory (Probable). Drives naive CD4(+) T cells to the Th17 lineage, through 'cluster signaling' by dendritic cells (PubMed:27893700).</text>
</comment>
<comment type="function">
    <molecule>Soluble interleukin-6 receptor subunit alpha</molecule>
    <text evidence="1 5 9">Soluble form of IL6 receptor (sIL6R) that acts as an agonist of IL6 activity (PubMed:11113088). The IL6:sIL6R complex (hyper-IL6) binds to IL6ST/gp130 on cell surfaces and induces signaling also on cells that do not express membrane-bound IL6R in a process called IL6 'trans-signaling'. sIL6R is causative for the pro-inflammatory properties of IL6 and an important player in the development of chronic inflammatory diseases (By similarity). In complex with IL6, is required for induction of VEGF production (By similarity). Plays a protective role during liver injury, being required for maintenance of tissue regeneration (PubMed:11113088). 'Trans-signaling' in central nervous system regulates energy and glucose homeostasis (PubMed:28402851).</text>
</comment>
<comment type="activity regulation">
    <text evidence="1">Classic and trans-signaling are both inhibited by tocilizumab, a humanized monoclonal antibody that blocks interleukin IL6R signaling.</text>
</comment>
<comment type="subunit">
    <text evidence="8">Component of a hexamer of two molecules each of IL6, IL6R and IL6ST; first binds to IL6 to associate with the signaling subunit IL6ST (PubMed:28265003). Interacts (via N-terminal ectodomain) with SORL1; this interaction may affect IL6-binding to IL6R, hence decrease IL6 'classic-signaling' (PubMed:28265003).</text>
</comment>
<comment type="subunit">
    <molecule>Soluble interleukin-6 receptor subunit alpha</molecule>
    <text evidence="1">Also interacts with SORL1; this interaction leads to soluble IL6R internalization. May form a trimeric complex with the soluble SORL1 ectodomain and circulating IL6 receptor; this interaction might stabilize circulating IL6, hence promote IL6 'trans-signaling'.</text>
</comment>
<comment type="subcellular location">
    <molecule>Interleukin-6 receptor subunit alpha</molecule>
    <subcellularLocation>
        <location evidence="7">Cell membrane</location>
        <topology evidence="2">Single-pass type I membrane protein</topology>
    </subcellularLocation>
</comment>
<comment type="subcellular location">
    <molecule>Soluble interleukin-6 receptor subunit alpha</molecule>
    <subcellularLocation>
        <location evidence="9">Secreted</location>
    </subcellularLocation>
</comment>
<comment type="tissue specificity">
    <text evidence="7">Expressed by dendritic cells.</text>
</comment>
<comment type="tissue specificity">
    <molecule>Soluble interleukin-6 receptor subunit alpha</molecule>
    <text evidence="9">Detected in the cerebrospinal fluid.</text>
</comment>
<comment type="induction">
    <molecule>Soluble interleukin-6 receptor subunit alpha</molecule>
    <text evidence="9">Levels in the cerebrospinal fluid are increased in obese mice.</text>
</comment>
<comment type="domain">
    <text>The two fibronectin type-III-like domains contained in the C-terminal part form together a cytokine-binding domain.</text>
</comment>
<comment type="domain">
    <text>The WSXWS motif appears to be necessary for proper protein folding and thereby efficient intracellular transport and cell-surface receptor binding.</text>
</comment>
<comment type="PTM">
    <text evidence="6">A short soluble form is also released from the membrane by proteolysis (PubMed:26876177). The sIL6R is formed by limited proteolysis of membrane-bound receptors, a process referred to as ectodomain shedding (PubMed:26876177). mIL6R is cleaved by the proteases ADAM10 and ADAM17 (PubMed:26876177).</text>
</comment>
<comment type="PTM">
    <text evidence="1">Glycosylated. Glycosylation is dispensable for transport, signaling, and cell-surface turnover. Glycosylation at Asn-55 is a protease-regulatory exosite. Glycosylation is required for ADAM17-mediated proteolysis.</text>
</comment>
<comment type="similarity">
    <text evidence="11">Belongs to the type I cytokine receptor family. Type 3 subfamily.</text>
</comment>
<name>IL6RA_MOUSE</name>
<proteinExistence type="evidence at protein level"/>
<reference key="1">
    <citation type="journal article" date="1990" name="J. Exp. Med.">
        <title>Functional murine interleukin 6 receptor with the intracisternal A particle gene product at its cytoplasmic domain. Its possible role in plasmacytomagenesis.</title>
        <authorList>
            <person name="Sugita T."/>
            <person name="Totsuka T."/>
            <person name="Saito M."/>
            <person name="Yamasaki K."/>
            <person name="Taga T."/>
            <person name="Hirano T."/>
            <person name="Kishimoto T."/>
        </authorList>
    </citation>
    <scope>NUCLEOTIDE SEQUENCE [MRNA]</scope>
    <source>
        <strain>BALB/cJ</strain>
        <tissue>Spleen</tissue>
    </source>
</reference>
<reference key="2">
    <citation type="submission" date="1990-07" db="EMBL/GenBank/DDBJ databases">
        <authorList>
            <person name="Fiorillo M.T."/>
            <person name="Ciliberto G."/>
            <person name="Dente L."/>
        </authorList>
    </citation>
    <scope>NUCLEOTIDE SEQUENCE [MRNA]</scope>
    <source>
        <strain>C3H/HeJ</strain>
        <tissue>Liver</tissue>
    </source>
</reference>
<reference key="3">
    <citation type="journal article" date="2000" name="Gastroenterology">
        <title>Combined interleukin 6 and soluble interleukin 6 receptor accelerates murine liver regeneration.</title>
        <authorList>
            <person name="Peters M."/>
            <person name="Blinn G."/>
            <person name="Jostock T."/>
            <person name="Schirmacher P."/>
            <person name="Meyer zum Bueschenfelde K.H."/>
            <person name="Galle P.R."/>
            <person name="Rose-John S."/>
        </authorList>
    </citation>
    <scope>FUNCTION (ISOFORM 2)</scope>
</reference>
<reference key="4">
    <citation type="journal article" date="2017" name="Mol. Cell. Biol.">
        <title>SorLA in Interleukin-6 Signaling and Turnover.</title>
        <authorList>
            <person name="Larsen J.V."/>
            <person name="Petersen C.M."/>
        </authorList>
    </citation>
    <scope>FUNCTION</scope>
    <scope>INTERACTION WITH SORL1</scope>
</reference>
<reference key="5">
    <citation type="journal article" date="2016" name="Cell Rep.">
        <title>Proteolytic Cleavage Governs Interleukin-11 Trans-signaling.</title>
        <authorList>
            <person name="Lokau J."/>
            <person name="Nitz R."/>
            <person name="Agthe M."/>
            <person name="Monhasery N."/>
            <person name="Aparicio-Siegmund S."/>
            <person name="Schumacher N."/>
            <person name="Wolf J."/>
            <person name="Moeller-Hackbarth K."/>
            <person name="Waetzig G.H."/>
            <person name="Groetzinger J."/>
            <person name="Mueller-Newen G."/>
            <person name="Rose-John S."/>
            <person name="Scheller J."/>
            <person name="Garbers C."/>
        </authorList>
    </citation>
    <scope>FUNCTION</scope>
    <scope>PROTEOLYTIC CLEAVAGE</scope>
</reference>
<reference key="6">
    <citation type="journal article" date="2017" name="Cell Rep.">
        <title>IL-6 Improves Energy and Glucose Homeostasis in Obesity via Enhanced Central IL-6 trans-Signaling.</title>
        <authorList>
            <person name="Timper K."/>
            <person name="Denson J.L."/>
            <person name="Steculorum S.M."/>
            <person name="Heilinger C."/>
            <person name="Engstroem-Ruud L."/>
            <person name="Wunderlich C.M."/>
            <person name="Rose-John S."/>
            <person name="Wunderlich F.T."/>
            <person name="Bruening J.C."/>
        </authorList>
    </citation>
    <scope>FUNCTION</scope>
    <scope>TISSUE SPECIFICITY</scope>
    <scope>SUBCELLULAR LOCATION</scope>
</reference>
<reference key="7">
    <citation type="journal article" date="2017" name="Nat. Immunol.">
        <title>Trans-presentation of IL-6 by dendritic cells is required for the priming of pathogenic TH17 cells.</title>
        <authorList>
            <person name="Heink S."/>
            <person name="Yogev N."/>
            <person name="Garbers C."/>
            <person name="Herwerth M."/>
            <person name="Aly L."/>
            <person name="Gasperi C."/>
            <person name="Husterer V."/>
            <person name="Croxford A.L."/>
            <person name="Moeller-Hackbarth K."/>
            <person name="Bartsch H.S."/>
            <person name="Sotlar K."/>
            <person name="Krebs S."/>
            <person name="Regen T."/>
            <person name="Blum H."/>
            <person name="Hemmer B."/>
            <person name="Misgeld T."/>
            <person name="Wunderlich T.F."/>
            <person name="Hidalgo J."/>
            <person name="Oukka M."/>
            <person name="Rose-John S."/>
            <person name="Schmidt-Supprian M."/>
            <person name="Waisman A."/>
            <person name="Korn T."/>
        </authorList>
    </citation>
    <scope>FUNCTION</scope>
    <scope>TISSUE SPECIFICITY</scope>
</reference>
<reference key="8">
    <citation type="journal article" date="2019" name="Immunity">
        <title>Targeting Interleukin-6 Signaling in Clinic.</title>
        <authorList>
            <person name="Kang S."/>
            <person name="Tanaka T."/>
            <person name="Narazaki M."/>
            <person name="Kishimoto T."/>
        </authorList>
    </citation>
    <scope>REVIEW ON FUNCTION</scope>
</reference>
<sequence>MLTVGCTLLVALLAAPAVALVLGSCRALEVANGTVTSLPGATVTLICPGKEAAGNVTIHWVYSGSQNREWTTTGNTLVLRDVQLSDTGDYLCSLNDHLVGTVPLLVDVPPEEPKLSCFRKNPLVNAICEWRPSSTPSPTTKAVLFAKKINTTNGKSDFQVPCQYSQQLKSFSCQVEILEGDKVYHIVSLCVANSVGSKSSHNEAFHSLKMVQPDPPANLVVSAIPGRPRWLKVSWQHPETWDPSYYLLQFQLRYRPVWSKEFTVLLLPVAQYQCVIHDALRGVKHVVQVRGKEELDLGQWSEWSPEVTGTPWIAEPRTTPAGILWNPTQVSVEDSANHEDQYESSTEATSVLAPVQESSSMSLPTFLVAGGSLAFGLLLCVFIILRLKQKWKSEAEKESKTTSPPPPPYSLGPLKPTFLLVPLLTPHSSGSDNTVNHSCLGVRDAQSPYDNSNRDYLFPR</sequence>
<feature type="signal peptide">
    <location>
        <begin position="1"/>
        <end position="19"/>
    </location>
</feature>
<feature type="chain" id="PRO_0000010896" description="Interleukin-6 receptor subunit alpha">
    <location>
        <begin position="20"/>
        <end position="460"/>
    </location>
</feature>
<feature type="chain" id="PRO_0000450731" description="Soluble interleukin-6 receptor subunit alpha" evidence="1">
    <location>
        <begin position="20"/>
        <end position="354"/>
    </location>
</feature>
<feature type="topological domain" description="Extracellular" evidence="2">
    <location>
        <begin position="20"/>
        <end position="364"/>
    </location>
</feature>
<feature type="transmembrane region" description="Helical" evidence="2">
    <location>
        <begin position="365"/>
        <end position="385"/>
    </location>
</feature>
<feature type="topological domain" description="Cytoplasmic" evidence="2">
    <location>
        <begin position="386"/>
        <end position="460"/>
    </location>
</feature>
<feature type="domain" description="Ig-like C2-type">
    <location>
        <begin position="20"/>
        <end position="116"/>
    </location>
</feature>
<feature type="domain" description="Fibronectin type-III 1" evidence="4">
    <location>
        <begin position="109"/>
        <end position="214"/>
    </location>
</feature>
<feature type="domain" description="Fibronectin type-III 2" evidence="4">
    <location>
        <begin position="215"/>
        <end position="313"/>
    </location>
</feature>
<feature type="short sequence motif" description="WSXWS motif">
    <location>
        <begin position="300"/>
        <end position="304"/>
    </location>
</feature>
<feature type="site" description="Cleavage; by ADAM10 and ADAM17" evidence="1">
    <location>
        <begin position="354"/>
        <end position="355"/>
    </location>
</feature>
<feature type="glycosylation site" description="N-linked (GlcNAc...) asparagine" evidence="2">
    <location>
        <position position="32"/>
    </location>
</feature>
<feature type="glycosylation site" description="N-linked (GlcNAc...) asparagine" evidence="1">
    <location>
        <position position="55"/>
    </location>
</feature>
<feature type="glycosylation site" description="N-linked (GlcNAc...) asparagine" evidence="2">
    <location>
        <position position="150"/>
    </location>
</feature>
<feature type="glycosylation site" description="N-linked (GlcNAc...) asparagine" evidence="1">
    <location>
        <position position="218"/>
    </location>
</feature>
<feature type="disulfide bond" evidence="3">
    <location>
        <begin position="25"/>
        <end position="190"/>
    </location>
</feature>
<feature type="disulfide bond" evidence="3">
    <location>
        <begin position="47"/>
        <end position="92"/>
    </location>
</feature>
<feature type="disulfide bond" evidence="3">
    <location>
        <begin position="117"/>
        <end position="128"/>
    </location>
</feature>
<feature type="disulfide bond" evidence="3">
    <location>
        <begin position="162"/>
        <end position="173"/>
    </location>
</feature>
<feature type="sequence conflict" description="In Ref. 2; CAA37810." evidence="11" ref="2">
    <original>A</original>
    <variation>R</variation>
    <location>
        <position position="374"/>
    </location>
</feature>
<dbReference type="EMBL" id="X51975">
    <property type="protein sequence ID" value="CAA36237.1"/>
    <property type="molecule type" value="mRNA"/>
</dbReference>
<dbReference type="EMBL" id="X53802">
    <property type="protein sequence ID" value="CAA37810.1"/>
    <property type="molecule type" value="mRNA"/>
</dbReference>
<dbReference type="CCDS" id="CCDS38496.1"/>
<dbReference type="PIR" id="JL0144">
    <property type="entry name" value="JL0144"/>
</dbReference>
<dbReference type="PIR" id="JL0145">
    <property type="entry name" value="JL0145"/>
</dbReference>
<dbReference type="RefSeq" id="NP_034689.2">
    <property type="nucleotide sequence ID" value="NM_010559.3"/>
</dbReference>
<dbReference type="SMR" id="P22272"/>
<dbReference type="BioGRID" id="200642">
    <property type="interactions" value="1"/>
</dbReference>
<dbReference type="FunCoup" id="P22272">
    <property type="interactions" value="775"/>
</dbReference>
<dbReference type="IntAct" id="P22272">
    <property type="interactions" value="1"/>
</dbReference>
<dbReference type="STRING" id="10090.ENSMUSP00000029559"/>
<dbReference type="GlyCosmos" id="P22272">
    <property type="glycosylation" value="4 sites, No reported glycans"/>
</dbReference>
<dbReference type="GlyGen" id="P22272">
    <property type="glycosylation" value="5 sites, 1 N-linked glycan (1 site)"/>
</dbReference>
<dbReference type="PhosphoSitePlus" id="P22272"/>
<dbReference type="PaxDb" id="10090-ENSMUSP00000029559"/>
<dbReference type="ProteomicsDB" id="267126"/>
<dbReference type="ABCD" id="P22272">
    <property type="antibodies" value="22 sequenced antibodies"/>
</dbReference>
<dbReference type="Antibodypedia" id="20397">
    <property type="antibodies" value="1118 antibodies from 43 providers"/>
</dbReference>
<dbReference type="DNASU" id="16194"/>
<dbReference type="Ensembl" id="ENSMUST00000029559.7">
    <property type="protein sequence ID" value="ENSMUSP00000029559.7"/>
    <property type="gene ID" value="ENSMUSG00000027947.12"/>
</dbReference>
<dbReference type="GeneID" id="16194"/>
<dbReference type="KEGG" id="mmu:16194"/>
<dbReference type="UCSC" id="uc008qaf.1">
    <property type="organism name" value="mouse"/>
</dbReference>
<dbReference type="AGR" id="MGI:105304"/>
<dbReference type="CTD" id="16194"/>
<dbReference type="MGI" id="MGI:105304">
    <property type="gene designation" value="Il6ra"/>
</dbReference>
<dbReference type="VEuPathDB" id="HostDB:ENSMUSG00000027947"/>
<dbReference type="eggNOG" id="ENOG502RY0M">
    <property type="taxonomic scope" value="Eukaryota"/>
</dbReference>
<dbReference type="GeneTree" id="ENSGT00940000161919"/>
<dbReference type="HOGENOM" id="CLU_051451_0_0_1"/>
<dbReference type="InParanoid" id="P22272"/>
<dbReference type="OMA" id="IIHDAWR"/>
<dbReference type="OrthoDB" id="8634471at2759"/>
<dbReference type="PhylomeDB" id="P22272"/>
<dbReference type="TreeFam" id="TF331210"/>
<dbReference type="Reactome" id="R-MMU-1059683">
    <property type="pathway name" value="Interleukin-6 signaling"/>
</dbReference>
<dbReference type="Reactome" id="R-MMU-110056">
    <property type="pathway name" value="MAPK3 (ERK1) activation"/>
</dbReference>
<dbReference type="Reactome" id="R-MMU-112411">
    <property type="pathway name" value="MAPK1 (ERK2) activation"/>
</dbReference>
<dbReference type="BioGRID-ORCS" id="16194">
    <property type="hits" value="3 hits in 79 CRISPR screens"/>
</dbReference>
<dbReference type="PRO" id="PR:P22272"/>
<dbReference type="Proteomes" id="UP000000589">
    <property type="component" value="Chromosome 3"/>
</dbReference>
<dbReference type="RNAct" id="P22272">
    <property type="molecule type" value="protein"/>
</dbReference>
<dbReference type="Bgee" id="ENSMUSG00000027947">
    <property type="expression patterns" value="Expressed in granulocyte and 121 other cell types or tissues"/>
</dbReference>
<dbReference type="ExpressionAtlas" id="P22272">
    <property type="expression patterns" value="baseline and differential"/>
</dbReference>
<dbReference type="GO" id="GO:0016324">
    <property type="term" value="C:apical plasma membrane"/>
    <property type="evidence" value="ECO:0007669"/>
    <property type="project" value="Ensembl"/>
</dbReference>
<dbReference type="GO" id="GO:0009986">
    <property type="term" value="C:cell surface"/>
    <property type="evidence" value="ECO:0000314"/>
    <property type="project" value="MGI"/>
</dbReference>
<dbReference type="GO" id="GO:0070110">
    <property type="term" value="C:ciliary neurotrophic factor receptor complex"/>
    <property type="evidence" value="ECO:0007669"/>
    <property type="project" value="Ensembl"/>
</dbReference>
<dbReference type="GO" id="GO:0005576">
    <property type="term" value="C:extracellular region"/>
    <property type="evidence" value="ECO:0007669"/>
    <property type="project" value="UniProtKB-SubCell"/>
</dbReference>
<dbReference type="GO" id="GO:0005896">
    <property type="term" value="C:interleukin-6 receptor complex"/>
    <property type="evidence" value="ECO:0000314"/>
    <property type="project" value="UniProtKB"/>
</dbReference>
<dbReference type="GO" id="GO:0005886">
    <property type="term" value="C:plasma membrane"/>
    <property type="evidence" value="ECO:0000304"/>
    <property type="project" value="Reactome"/>
</dbReference>
<dbReference type="GO" id="GO:0070119">
    <property type="term" value="F:ciliary neurotrophic factor binding"/>
    <property type="evidence" value="ECO:0007669"/>
    <property type="project" value="Ensembl"/>
</dbReference>
<dbReference type="GO" id="GO:0004897">
    <property type="term" value="F:ciliary neurotrophic factor receptor activity"/>
    <property type="evidence" value="ECO:0007669"/>
    <property type="project" value="Ensembl"/>
</dbReference>
<dbReference type="GO" id="GO:0019899">
    <property type="term" value="F:enzyme binding"/>
    <property type="evidence" value="ECO:0007669"/>
    <property type="project" value="Ensembl"/>
</dbReference>
<dbReference type="GO" id="GO:0019981">
    <property type="term" value="F:interleukin-6 binding"/>
    <property type="evidence" value="ECO:0000314"/>
    <property type="project" value="MGI"/>
</dbReference>
<dbReference type="GO" id="GO:0004915">
    <property type="term" value="F:interleukin-6 receptor activity"/>
    <property type="evidence" value="ECO:0000314"/>
    <property type="project" value="UniProtKB"/>
</dbReference>
<dbReference type="GO" id="GO:0005138">
    <property type="term" value="F:interleukin-6 receptor binding"/>
    <property type="evidence" value="ECO:0007669"/>
    <property type="project" value="Ensembl"/>
</dbReference>
<dbReference type="GO" id="GO:0042803">
    <property type="term" value="F:protein homodimerization activity"/>
    <property type="evidence" value="ECO:0007669"/>
    <property type="project" value="Ensembl"/>
</dbReference>
<dbReference type="GO" id="GO:0097696">
    <property type="term" value="P:cell surface receptor signaling pathway via STAT"/>
    <property type="evidence" value="ECO:0007669"/>
    <property type="project" value="Ensembl"/>
</dbReference>
<dbReference type="GO" id="GO:0031018">
    <property type="term" value="P:endocrine pancreas development"/>
    <property type="evidence" value="ECO:0007669"/>
    <property type="project" value="Ensembl"/>
</dbReference>
<dbReference type="GO" id="GO:0070102">
    <property type="term" value="P:interleukin-6-mediated signaling pathway"/>
    <property type="evidence" value="ECO:0000314"/>
    <property type="project" value="UniProtKB"/>
</dbReference>
<dbReference type="GO" id="GO:0032722">
    <property type="term" value="P:positive regulation of chemokine production"/>
    <property type="evidence" value="ECO:0007669"/>
    <property type="project" value="Ensembl"/>
</dbReference>
<dbReference type="GO" id="GO:0072126">
    <property type="term" value="P:positive regulation of glomerular mesangial cell proliferation"/>
    <property type="evidence" value="ECO:0007669"/>
    <property type="project" value="Ensembl"/>
</dbReference>
<dbReference type="GO" id="GO:0032755">
    <property type="term" value="P:positive regulation of interleukin-6 production"/>
    <property type="evidence" value="ECO:0007669"/>
    <property type="project" value="Ensembl"/>
</dbReference>
<dbReference type="GO" id="GO:0048661">
    <property type="term" value="P:positive regulation of smooth muscle cell proliferation"/>
    <property type="evidence" value="ECO:0007669"/>
    <property type="project" value="Ensembl"/>
</dbReference>
<dbReference type="GO" id="GO:0072540">
    <property type="term" value="P:T-helper 17 cell lineage commitment"/>
    <property type="evidence" value="ECO:0000314"/>
    <property type="project" value="UniProtKB"/>
</dbReference>
<dbReference type="GO" id="GO:0010573">
    <property type="term" value="P:vascular endothelial growth factor production"/>
    <property type="evidence" value="ECO:0000250"/>
    <property type="project" value="UniProtKB"/>
</dbReference>
<dbReference type="CDD" id="cd00063">
    <property type="entry name" value="FN3"/>
    <property type="match status" value="1"/>
</dbReference>
<dbReference type="CDD" id="cd20939">
    <property type="entry name" value="IgC2_D1_IL-6RA"/>
    <property type="match status" value="1"/>
</dbReference>
<dbReference type="FunFam" id="2.60.40.10:FF:000136">
    <property type="entry name" value="Ciliary neurotrophic factor receptor alpha"/>
    <property type="match status" value="1"/>
</dbReference>
<dbReference type="FunFam" id="2.60.40.10:FF:000886">
    <property type="entry name" value="Interleukin-6 receptor subunit alpha"/>
    <property type="match status" value="1"/>
</dbReference>
<dbReference type="Gene3D" id="2.60.40.10">
    <property type="entry name" value="Immunoglobulins"/>
    <property type="match status" value="3"/>
</dbReference>
<dbReference type="InterPro" id="IPR003961">
    <property type="entry name" value="FN3_dom"/>
</dbReference>
<dbReference type="InterPro" id="IPR036116">
    <property type="entry name" value="FN3_sf"/>
</dbReference>
<dbReference type="InterPro" id="IPR003530">
    <property type="entry name" value="Hematopoietin_rcpt_L_F3_CS"/>
</dbReference>
<dbReference type="InterPro" id="IPR007110">
    <property type="entry name" value="Ig-like_dom"/>
</dbReference>
<dbReference type="InterPro" id="IPR036179">
    <property type="entry name" value="Ig-like_dom_sf"/>
</dbReference>
<dbReference type="InterPro" id="IPR013783">
    <property type="entry name" value="Ig-like_fold"/>
</dbReference>
<dbReference type="InterPro" id="IPR003599">
    <property type="entry name" value="Ig_sub"/>
</dbReference>
<dbReference type="InterPro" id="IPR003598">
    <property type="entry name" value="Ig_sub2"/>
</dbReference>
<dbReference type="InterPro" id="IPR013151">
    <property type="entry name" value="Immunoglobulin_dom"/>
</dbReference>
<dbReference type="InterPro" id="IPR015321">
    <property type="entry name" value="TypeI_recpt_CBD"/>
</dbReference>
<dbReference type="PANTHER" id="PTHR23037">
    <property type="entry name" value="CYTOKINE RECEPTOR"/>
    <property type="match status" value="1"/>
</dbReference>
<dbReference type="PANTHER" id="PTHR23037:SF35">
    <property type="entry name" value="FIBRONECTIN TYPE-III DOMAIN-CONTAINING PROTEIN"/>
    <property type="match status" value="1"/>
</dbReference>
<dbReference type="Pfam" id="PF00047">
    <property type="entry name" value="ig"/>
    <property type="match status" value="1"/>
</dbReference>
<dbReference type="Pfam" id="PF09240">
    <property type="entry name" value="IL6Ra-bind"/>
    <property type="match status" value="1"/>
</dbReference>
<dbReference type="SMART" id="SM00409">
    <property type="entry name" value="IG"/>
    <property type="match status" value="1"/>
</dbReference>
<dbReference type="SMART" id="SM00408">
    <property type="entry name" value="IGc2"/>
    <property type="match status" value="1"/>
</dbReference>
<dbReference type="SUPFAM" id="SSF49265">
    <property type="entry name" value="Fibronectin type III"/>
    <property type="match status" value="2"/>
</dbReference>
<dbReference type="SUPFAM" id="SSF48726">
    <property type="entry name" value="Immunoglobulin"/>
    <property type="match status" value="1"/>
</dbReference>
<dbReference type="PROSITE" id="PS50853">
    <property type="entry name" value="FN3"/>
    <property type="match status" value="2"/>
</dbReference>
<dbReference type="PROSITE" id="PS01354">
    <property type="entry name" value="HEMATOPO_REC_L_F3"/>
    <property type="match status" value="1"/>
</dbReference>
<dbReference type="PROSITE" id="PS50835">
    <property type="entry name" value="IG_LIKE"/>
    <property type="match status" value="1"/>
</dbReference>
<evidence type="ECO:0000250" key="1">
    <source>
        <dbReference type="UniProtKB" id="P08887"/>
    </source>
</evidence>
<evidence type="ECO:0000255" key="2"/>
<evidence type="ECO:0000255" key="3">
    <source>
        <dbReference type="PROSITE-ProRule" id="PRU00114"/>
    </source>
</evidence>
<evidence type="ECO:0000255" key="4">
    <source>
        <dbReference type="PROSITE-ProRule" id="PRU00316"/>
    </source>
</evidence>
<evidence type="ECO:0000269" key="5">
    <source>
    </source>
</evidence>
<evidence type="ECO:0000269" key="6">
    <source>
    </source>
</evidence>
<evidence type="ECO:0000269" key="7">
    <source>
    </source>
</evidence>
<evidence type="ECO:0000269" key="8">
    <source>
    </source>
</evidence>
<evidence type="ECO:0000269" key="9">
    <source>
    </source>
</evidence>
<evidence type="ECO:0000303" key="10">
    <source>
    </source>
</evidence>
<evidence type="ECO:0000305" key="11"/>
<evidence type="ECO:0000305" key="12">
    <source>
    </source>
</evidence>
<evidence type="ECO:0000312" key="13">
    <source>
        <dbReference type="MGI" id="MGI:105304"/>
    </source>
</evidence>